<accession>Q05EQ4</accession>
<dbReference type="EC" id="7.1.1.2"/>
<dbReference type="EMBL" id="AY582604">
    <property type="protein sequence ID" value="AAT36076.1"/>
    <property type="molecule type" value="Genomic_DNA"/>
</dbReference>
<dbReference type="EMBL" id="AY582605">
    <property type="protein sequence ID" value="AAT36080.1"/>
    <property type="molecule type" value="Genomic_DNA"/>
</dbReference>
<dbReference type="EMBL" id="AY582606">
    <property type="protein sequence ID" value="AAT36084.1"/>
    <property type="molecule type" value="Genomic_DNA"/>
</dbReference>
<dbReference type="SMR" id="Q05EQ4"/>
<dbReference type="GO" id="GO:0005743">
    <property type="term" value="C:mitochondrial inner membrane"/>
    <property type="evidence" value="ECO:0000250"/>
    <property type="project" value="UniProtKB"/>
</dbReference>
<dbReference type="GO" id="GO:0045271">
    <property type="term" value="C:respiratory chain complex I"/>
    <property type="evidence" value="ECO:0000250"/>
    <property type="project" value="UniProtKB"/>
</dbReference>
<dbReference type="GO" id="GO:0008137">
    <property type="term" value="F:NADH dehydrogenase (ubiquinone) activity"/>
    <property type="evidence" value="ECO:0000250"/>
    <property type="project" value="UniProtKB"/>
</dbReference>
<dbReference type="GO" id="GO:0042773">
    <property type="term" value="P:ATP synthesis coupled electron transport"/>
    <property type="evidence" value="ECO:0007669"/>
    <property type="project" value="InterPro"/>
</dbReference>
<dbReference type="FunFam" id="1.10.287.3510:FF:000002">
    <property type="entry name" value="NADH-ubiquinone oxidoreductase chain 4L"/>
    <property type="match status" value="1"/>
</dbReference>
<dbReference type="Gene3D" id="1.10.287.3510">
    <property type="match status" value="1"/>
</dbReference>
<dbReference type="InterPro" id="IPR001133">
    <property type="entry name" value="NADH_UbQ_OxRdtase_chain4L/K"/>
</dbReference>
<dbReference type="InterPro" id="IPR039428">
    <property type="entry name" value="NUOK/Mnh_C1-like"/>
</dbReference>
<dbReference type="PANTHER" id="PTHR11434:SF0">
    <property type="entry name" value="NADH-UBIQUINONE OXIDOREDUCTASE CHAIN 4L"/>
    <property type="match status" value="1"/>
</dbReference>
<dbReference type="PANTHER" id="PTHR11434">
    <property type="entry name" value="NADH-UBIQUINONE OXIDOREDUCTASE SUBUNIT ND4L"/>
    <property type="match status" value="1"/>
</dbReference>
<dbReference type="Pfam" id="PF00420">
    <property type="entry name" value="Oxidored_q2"/>
    <property type="match status" value="1"/>
</dbReference>
<protein>
    <recommendedName>
        <fullName>NADH-ubiquinone oxidoreductase chain 4L</fullName>
        <ecNumber>7.1.1.2</ecNumber>
    </recommendedName>
    <alternativeName>
        <fullName>NADH dehydrogenase subunit 4L</fullName>
    </alternativeName>
</protein>
<name>NU4LM_LEPMS</name>
<evidence type="ECO:0000250" key="1">
    <source>
        <dbReference type="UniProtKB" id="P03901"/>
    </source>
</evidence>
<evidence type="ECO:0000250" key="2">
    <source>
        <dbReference type="UniProtKB" id="P03902"/>
    </source>
</evidence>
<evidence type="ECO:0000255" key="3"/>
<evidence type="ECO:0000305" key="4"/>
<comment type="function">
    <text evidence="1">Core subunit of the mitochondrial membrane respiratory chain NADH dehydrogenase (Complex I) which catalyzes electron transfer from NADH through the respiratory chain, using ubiquinone as an electron acceptor. Part of the enzyme membrane arm which is embedded in the lipid bilayer and involved in proton translocation.</text>
</comment>
<comment type="catalytic activity">
    <reaction evidence="1">
        <text>a ubiquinone + NADH + 5 H(+)(in) = a ubiquinol + NAD(+) + 4 H(+)(out)</text>
        <dbReference type="Rhea" id="RHEA:29091"/>
        <dbReference type="Rhea" id="RHEA-COMP:9565"/>
        <dbReference type="Rhea" id="RHEA-COMP:9566"/>
        <dbReference type="ChEBI" id="CHEBI:15378"/>
        <dbReference type="ChEBI" id="CHEBI:16389"/>
        <dbReference type="ChEBI" id="CHEBI:17976"/>
        <dbReference type="ChEBI" id="CHEBI:57540"/>
        <dbReference type="ChEBI" id="CHEBI:57945"/>
        <dbReference type="EC" id="7.1.1.2"/>
    </reaction>
    <physiologicalReaction direction="left-to-right" evidence="1">
        <dbReference type="Rhea" id="RHEA:29092"/>
    </physiologicalReaction>
</comment>
<comment type="subunit">
    <text evidence="2">Core subunit of respiratory chain NADH dehydrogenase (Complex I) which is composed of 45 different subunits.</text>
</comment>
<comment type="subcellular location">
    <subcellularLocation>
        <location evidence="2">Mitochondrion inner membrane</location>
        <topology evidence="3">Multi-pass membrane protein</topology>
    </subcellularLocation>
</comment>
<comment type="similarity">
    <text evidence="4">Belongs to the complex I subunit 4L family.</text>
</comment>
<sequence>MPSISINITLAFTMALTGMLVFRSHLMSSLLCLEGMMLSMFILSILFIMNMHFTVSFIMPILLLVLAACEAAIGLALLVMVSNTYGLDYVQNLNLLQC</sequence>
<geneLocation type="mitochondrion"/>
<organism>
    <name type="scientific">Lepilemur mitsinjoensis</name>
    <name type="common">Mitsinjo sportive lemur</name>
    <dbReference type="NCBI Taxonomy" id="236287"/>
    <lineage>
        <taxon>Eukaryota</taxon>
        <taxon>Metazoa</taxon>
        <taxon>Chordata</taxon>
        <taxon>Craniata</taxon>
        <taxon>Vertebrata</taxon>
        <taxon>Euteleostomi</taxon>
        <taxon>Mammalia</taxon>
        <taxon>Eutheria</taxon>
        <taxon>Euarchontoglires</taxon>
        <taxon>Primates</taxon>
        <taxon>Strepsirrhini</taxon>
        <taxon>Lemuriformes</taxon>
        <taxon>Lepilemuridae</taxon>
        <taxon>Lepilemur</taxon>
    </lineage>
</organism>
<reference key="1">
    <citation type="book" date="2006" name="Texas Tech University Special Publications">
        <title>Molecular and morphological analyses of the sportive lemurs (family Megaladapidae: genus Lepilemur) reveals 11 previously unrecognized species.</title>
        <editorList>
            <person name="Baker R.J."/>
        </editorList>
        <authorList>
            <person name="Louis E.E. Jr."/>
            <person name="Engberg S.E."/>
            <person name="Lei R."/>
            <person name="Geng H."/>
            <person name="Sommer J.A."/>
            <person name="Randriamampionona R."/>
            <person name="Randriamanana J.C."/>
            <person name="Zaonarivelo J.R."/>
            <person name="Andriantompohavana R."/>
            <person name="Randria G."/>
            <person name="Ramaromilanto B."/>
            <person name="Rakotoarisoa G."/>
            <person name="Rooney A."/>
            <person name="Brenneman R.A."/>
        </authorList>
    </citation>
    <scope>NUCLEOTIDE SEQUENCE [GENOMIC DNA]</scope>
    <source>
        <strain>Isolate MIT16</strain>
        <strain>Isolate MIT17</strain>
        <strain>Isolate PBZT112</strain>
    </source>
</reference>
<feature type="chain" id="PRO_0000275039" description="NADH-ubiquinone oxidoreductase chain 4L">
    <location>
        <begin position="1"/>
        <end position="98"/>
    </location>
</feature>
<feature type="transmembrane region" description="Helical" evidence="3">
    <location>
        <begin position="2"/>
        <end position="22"/>
    </location>
</feature>
<feature type="transmembrane region" description="Helical" evidence="3">
    <location>
        <begin position="29"/>
        <end position="49"/>
    </location>
</feature>
<feature type="transmembrane region" description="Helical" evidence="3">
    <location>
        <begin position="61"/>
        <end position="81"/>
    </location>
</feature>
<proteinExistence type="inferred from homology"/>
<keyword id="KW-0249">Electron transport</keyword>
<keyword id="KW-0472">Membrane</keyword>
<keyword id="KW-0496">Mitochondrion</keyword>
<keyword id="KW-0999">Mitochondrion inner membrane</keyword>
<keyword id="KW-0520">NAD</keyword>
<keyword id="KW-0679">Respiratory chain</keyword>
<keyword id="KW-1278">Translocase</keyword>
<keyword id="KW-0812">Transmembrane</keyword>
<keyword id="KW-1133">Transmembrane helix</keyword>
<keyword id="KW-0813">Transport</keyword>
<keyword id="KW-0830">Ubiquinone</keyword>
<gene>
    <name type="primary">MT-ND4L</name>
    <name type="synonym">MTND4L</name>
    <name type="synonym">NADH4L</name>
    <name type="synonym">ND4L</name>
</gene>